<organism>
    <name type="scientific">Yersinia pestis bv. Antiqua (strain Nepal516)</name>
    <dbReference type="NCBI Taxonomy" id="377628"/>
    <lineage>
        <taxon>Bacteria</taxon>
        <taxon>Pseudomonadati</taxon>
        <taxon>Pseudomonadota</taxon>
        <taxon>Gammaproteobacteria</taxon>
        <taxon>Enterobacterales</taxon>
        <taxon>Yersiniaceae</taxon>
        <taxon>Yersinia</taxon>
    </lineage>
</organism>
<protein>
    <recommendedName>
        <fullName evidence="1">Glutamate--tRNA ligase</fullName>
        <ecNumber evidence="1">6.1.1.17</ecNumber>
    </recommendedName>
    <alternativeName>
        <fullName evidence="1">Glutamyl-tRNA synthetase</fullName>
        <shortName evidence="1">GluRS</shortName>
    </alternativeName>
</protein>
<dbReference type="EC" id="6.1.1.17" evidence="1"/>
<dbReference type="EMBL" id="CP000305">
    <property type="protein sequence ID" value="ABG17728.1"/>
    <property type="molecule type" value="Genomic_DNA"/>
</dbReference>
<dbReference type="EMBL" id="ACNQ01000009">
    <property type="protein sequence ID" value="EEO76823.1"/>
    <property type="molecule type" value="Genomic_DNA"/>
</dbReference>
<dbReference type="RefSeq" id="WP_002222185.1">
    <property type="nucleotide sequence ID" value="NZ_ACNQ01000009.1"/>
</dbReference>
<dbReference type="SMR" id="Q1CJV2"/>
<dbReference type="GeneID" id="57975716"/>
<dbReference type="KEGG" id="ypn:YPN_1398"/>
<dbReference type="HOGENOM" id="CLU_015768_6_0_6"/>
<dbReference type="Proteomes" id="UP000008936">
    <property type="component" value="Chromosome"/>
</dbReference>
<dbReference type="GO" id="GO:0005829">
    <property type="term" value="C:cytosol"/>
    <property type="evidence" value="ECO:0007669"/>
    <property type="project" value="TreeGrafter"/>
</dbReference>
<dbReference type="GO" id="GO:0005524">
    <property type="term" value="F:ATP binding"/>
    <property type="evidence" value="ECO:0007669"/>
    <property type="project" value="UniProtKB-UniRule"/>
</dbReference>
<dbReference type="GO" id="GO:0004818">
    <property type="term" value="F:glutamate-tRNA ligase activity"/>
    <property type="evidence" value="ECO:0007669"/>
    <property type="project" value="UniProtKB-UniRule"/>
</dbReference>
<dbReference type="GO" id="GO:0000049">
    <property type="term" value="F:tRNA binding"/>
    <property type="evidence" value="ECO:0007669"/>
    <property type="project" value="InterPro"/>
</dbReference>
<dbReference type="GO" id="GO:0008270">
    <property type="term" value="F:zinc ion binding"/>
    <property type="evidence" value="ECO:0007669"/>
    <property type="project" value="UniProtKB-UniRule"/>
</dbReference>
<dbReference type="GO" id="GO:0006424">
    <property type="term" value="P:glutamyl-tRNA aminoacylation"/>
    <property type="evidence" value="ECO:0007669"/>
    <property type="project" value="UniProtKB-UniRule"/>
</dbReference>
<dbReference type="CDD" id="cd00808">
    <property type="entry name" value="GluRS_core"/>
    <property type="match status" value="1"/>
</dbReference>
<dbReference type="FunFam" id="1.10.10.350:FF:000001">
    <property type="entry name" value="Glutamate--tRNA ligase"/>
    <property type="match status" value="1"/>
</dbReference>
<dbReference type="FunFam" id="3.40.50.620:FF:000007">
    <property type="entry name" value="Glutamate--tRNA ligase"/>
    <property type="match status" value="1"/>
</dbReference>
<dbReference type="Gene3D" id="1.10.10.350">
    <property type="match status" value="1"/>
</dbReference>
<dbReference type="Gene3D" id="3.40.50.620">
    <property type="entry name" value="HUPs"/>
    <property type="match status" value="1"/>
</dbReference>
<dbReference type="HAMAP" id="MF_00022">
    <property type="entry name" value="Glu_tRNA_synth_type1"/>
    <property type="match status" value="1"/>
</dbReference>
<dbReference type="InterPro" id="IPR045462">
    <property type="entry name" value="aa-tRNA-synth_I_cd-bd"/>
</dbReference>
<dbReference type="InterPro" id="IPR020751">
    <property type="entry name" value="aa-tRNA-synth_I_codon-bd_sub2"/>
</dbReference>
<dbReference type="InterPro" id="IPR001412">
    <property type="entry name" value="aa-tRNA-synth_I_CS"/>
</dbReference>
<dbReference type="InterPro" id="IPR008925">
    <property type="entry name" value="aa_tRNA-synth_I_cd-bd_sf"/>
</dbReference>
<dbReference type="InterPro" id="IPR004527">
    <property type="entry name" value="Glu-tRNA-ligase_bac/mito"/>
</dbReference>
<dbReference type="InterPro" id="IPR000924">
    <property type="entry name" value="Glu/Gln-tRNA-synth"/>
</dbReference>
<dbReference type="InterPro" id="IPR020058">
    <property type="entry name" value="Glu/Gln-tRNA-synth_Ib_cat-dom"/>
</dbReference>
<dbReference type="InterPro" id="IPR049940">
    <property type="entry name" value="GluQ/Sye"/>
</dbReference>
<dbReference type="InterPro" id="IPR033910">
    <property type="entry name" value="GluRS_core"/>
</dbReference>
<dbReference type="InterPro" id="IPR014729">
    <property type="entry name" value="Rossmann-like_a/b/a_fold"/>
</dbReference>
<dbReference type="NCBIfam" id="TIGR00464">
    <property type="entry name" value="gltX_bact"/>
    <property type="match status" value="1"/>
</dbReference>
<dbReference type="PANTHER" id="PTHR43311">
    <property type="entry name" value="GLUTAMATE--TRNA LIGASE"/>
    <property type="match status" value="1"/>
</dbReference>
<dbReference type="PANTHER" id="PTHR43311:SF2">
    <property type="entry name" value="GLUTAMATE--TRNA LIGASE, MITOCHONDRIAL-RELATED"/>
    <property type="match status" value="1"/>
</dbReference>
<dbReference type="Pfam" id="PF19269">
    <property type="entry name" value="Anticodon_2"/>
    <property type="match status" value="1"/>
</dbReference>
<dbReference type="Pfam" id="PF00749">
    <property type="entry name" value="tRNA-synt_1c"/>
    <property type="match status" value="1"/>
</dbReference>
<dbReference type="PRINTS" id="PR00987">
    <property type="entry name" value="TRNASYNTHGLU"/>
</dbReference>
<dbReference type="SUPFAM" id="SSF48163">
    <property type="entry name" value="An anticodon-binding domain of class I aminoacyl-tRNA synthetases"/>
    <property type="match status" value="1"/>
</dbReference>
<dbReference type="SUPFAM" id="SSF52374">
    <property type="entry name" value="Nucleotidylyl transferase"/>
    <property type="match status" value="1"/>
</dbReference>
<dbReference type="PROSITE" id="PS00178">
    <property type="entry name" value="AA_TRNA_LIGASE_I"/>
    <property type="match status" value="1"/>
</dbReference>
<sequence>MKIKTRFAPSPTGYLHVGGARTALYSWLFSRHLGGEFVLRIEDTDLGRSTQEAIDAIMDGMNWLNLDWDEGPYFQTKRFDRYNAVIDQMLDAGTAYRCYCSKERLEALREAQMANGEKPRYDGHCRDSQCTHGADEPSVVRFRNPQEGSVIFDDKIRGPIEFSNQELDDLIIRRTDGSPTYNFCVVIDDWDMEITHVIRGEDHINNTPRQINILKALGAPVPEYAHVSMILGDDGKKLSKRHGAVGVMQYRDDGYLPEALLNYLVRLGWSHGDQEIFSIEEMTQLFTLDAVSKSASAFNTEKLQWLNHHYINSLPPEQVAVHLSWHVEQLGIDTRNGPELVEIVKLLGERCKTLKEMAESCRYFYEEFDAFDVDAAKKHLRPIARQPLEAVKVKLAAITEWTTENVHNAIQGTADELGVGMGKVGMPLRVAVTGVGQSPGMDVTVHAIGQARTLARIDKALAFISEREAQQ</sequence>
<evidence type="ECO:0000255" key="1">
    <source>
        <dbReference type="HAMAP-Rule" id="MF_00022"/>
    </source>
</evidence>
<gene>
    <name evidence="1" type="primary">gltX</name>
    <name type="ordered locus">YPN_1398</name>
    <name type="ORF">YP516_1546</name>
</gene>
<keyword id="KW-0030">Aminoacyl-tRNA synthetase</keyword>
<keyword id="KW-0067">ATP-binding</keyword>
<keyword id="KW-0963">Cytoplasm</keyword>
<keyword id="KW-0436">Ligase</keyword>
<keyword id="KW-0479">Metal-binding</keyword>
<keyword id="KW-0547">Nucleotide-binding</keyword>
<keyword id="KW-0648">Protein biosynthesis</keyword>
<keyword id="KW-0862">Zinc</keyword>
<accession>Q1CJV2</accession>
<accession>C4GS13</accession>
<name>SYE_YERPN</name>
<feature type="chain" id="PRO_1000001986" description="Glutamate--tRNA ligase">
    <location>
        <begin position="1"/>
        <end position="471"/>
    </location>
</feature>
<feature type="short sequence motif" description="'HIGH' region" evidence="1">
    <location>
        <begin position="9"/>
        <end position="19"/>
    </location>
</feature>
<feature type="short sequence motif" description="'KMSKS' region" evidence="1">
    <location>
        <begin position="237"/>
        <end position="241"/>
    </location>
</feature>
<feature type="binding site" evidence="1">
    <location>
        <position position="98"/>
    </location>
    <ligand>
        <name>Zn(2+)</name>
        <dbReference type="ChEBI" id="CHEBI:29105"/>
    </ligand>
</feature>
<feature type="binding site" evidence="1">
    <location>
        <position position="100"/>
    </location>
    <ligand>
        <name>Zn(2+)</name>
        <dbReference type="ChEBI" id="CHEBI:29105"/>
    </ligand>
</feature>
<feature type="binding site" evidence="1">
    <location>
        <position position="125"/>
    </location>
    <ligand>
        <name>Zn(2+)</name>
        <dbReference type="ChEBI" id="CHEBI:29105"/>
    </ligand>
</feature>
<feature type="binding site" evidence="1">
    <location>
        <position position="127"/>
    </location>
    <ligand>
        <name>Zn(2+)</name>
        <dbReference type="ChEBI" id="CHEBI:29105"/>
    </ligand>
</feature>
<feature type="binding site" evidence="1">
    <location>
        <position position="240"/>
    </location>
    <ligand>
        <name>ATP</name>
        <dbReference type="ChEBI" id="CHEBI:30616"/>
    </ligand>
</feature>
<reference key="1">
    <citation type="journal article" date="2006" name="J. Bacteriol.">
        <title>Complete genome sequence of Yersinia pestis strains Antiqua and Nepal516: evidence of gene reduction in an emerging pathogen.</title>
        <authorList>
            <person name="Chain P.S.G."/>
            <person name="Hu P."/>
            <person name="Malfatti S.A."/>
            <person name="Radnedge L."/>
            <person name="Larimer F."/>
            <person name="Vergez L.M."/>
            <person name="Worsham P."/>
            <person name="Chu M.C."/>
            <person name="Andersen G.L."/>
        </authorList>
    </citation>
    <scope>NUCLEOTIDE SEQUENCE [LARGE SCALE GENOMIC DNA]</scope>
    <source>
        <strain>Nepal516</strain>
    </source>
</reference>
<reference key="2">
    <citation type="submission" date="2009-04" db="EMBL/GenBank/DDBJ databases">
        <title>Yersinia pestis Nepal516A whole genome shotgun sequencing project.</title>
        <authorList>
            <person name="Plunkett G. III"/>
            <person name="Anderson B.D."/>
            <person name="Baumler D.J."/>
            <person name="Burland V."/>
            <person name="Cabot E.L."/>
            <person name="Glasner J.D."/>
            <person name="Mau B."/>
            <person name="Neeno-Eckwall E."/>
            <person name="Perna N.T."/>
            <person name="Munk A.C."/>
            <person name="Tapia R."/>
            <person name="Green L.D."/>
            <person name="Rogers Y.C."/>
            <person name="Detter J.C."/>
            <person name="Bruce D.C."/>
            <person name="Brettin T.S."/>
        </authorList>
    </citation>
    <scope>NUCLEOTIDE SEQUENCE [LARGE SCALE GENOMIC DNA]</scope>
    <source>
        <strain>Nepal516</strain>
    </source>
</reference>
<proteinExistence type="inferred from homology"/>
<comment type="function">
    <text evidence="1">Catalyzes the attachment of glutamate to tRNA(Glu) in a two-step reaction: glutamate is first activated by ATP to form Glu-AMP and then transferred to the acceptor end of tRNA(Glu).</text>
</comment>
<comment type="catalytic activity">
    <reaction evidence="1">
        <text>tRNA(Glu) + L-glutamate + ATP = L-glutamyl-tRNA(Glu) + AMP + diphosphate</text>
        <dbReference type="Rhea" id="RHEA:23540"/>
        <dbReference type="Rhea" id="RHEA-COMP:9663"/>
        <dbReference type="Rhea" id="RHEA-COMP:9680"/>
        <dbReference type="ChEBI" id="CHEBI:29985"/>
        <dbReference type="ChEBI" id="CHEBI:30616"/>
        <dbReference type="ChEBI" id="CHEBI:33019"/>
        <dbReference type="ChEBI" id="CHEBI:78442"/>
        <dbReference type="ChEBI" id="CHEBI:78520"/>
        <dbReference type="ChEBI" id="CHEBI:456215"/>
        <dbReference type="EC" id="6.1.1.17"/>
    </reaction>
</comment>
<comment type="cofactor">
    <cofactor evidence="1">
        <name>Zn(2+)</name>
        <dbReference type="ChEBI" id="CHEBI:29105"/>
    </cofactor>
    <text evidence="1">Binds 1 zinc ion per subunit.</text>
</comment>
<comment type="subunit">
    <text evidence="1">Monomer.</text>
</comment>
<comment type="subcellular location">
    <subcellularLocation>
        <location evidence="1">Cytoplasm</location>
    </subcellularLocation>
</comment>
<comment type="similarity">
    <text evidence="1">Belongs to the class-I aminoacyl-tRNA synthetase family. Glutamate--tRNA ligase type 1 subfamily.</text>
</comment>